<dbReference type="EMBL" id="D13509">
    <property type="protein sequence ID" value="BAA02727.1"/>
    <property type="molecule type" value="mRNA"/>
</dbReference>
<dbReference type="EMBL" id="D63359">
    <property type="protein sequence ID" value="BAA18928.1"/>
    <property type="molecule type" value="mRNA"/>
</dbReference>
<dbReference type="EMBL" id="D63360">
    <property type="protein sequence ID" value="BAA18929.1"/>
    <property type="molecule type" value="Genomic_DNA"/>
</dbReference>
<dbReference type="EMBL" id="BC027525">
    <property type="protein sequence ID" value="AAH27525.1"/>
    <property type="molecule type" value="mRNA"/>
</dbReference>
<dbReference type="CCDS" id="CCDS20253.1"/>
<dbReference type="PIR" id="S29822">
    <property type="entry name" value="S29822"/>
</dbReference>
<dbReference type="RefSeq" id="NP_035166.1">
    <property type="nucleotide sequence ID" value="NM_011036.1"/>
</dbReference>
<dbReference type="SMR" id="P35230"/>
<dbReference type="FunCoup" id="P35230">
    <property type="interactions" value="10"/>
</dbReference>
<dbReference type="STRING" id="10090.ENSMUSP00000094667"/>
<dbReference type="PaxDb" id="10090-ENSMUSP00000094667"/>
<dbReference type="PeptideAtlas" id="P35230"/>
<dbReference type="ProteomicsDB" id="255060"/>
<dbReference type="DNASU" id="18489"/>
<dbReference type="Ensembl" id="ENSMUST00000096904.6">
    <property type="protein sequence ID" value="ENSMUSP00000094667.4"/>
    <property type="gene ID" value="ENSMUSG00000071356.8"/>
</dbReference>
<dbReference type="GeneID" id="18489"/>
<dbReference type="KEGG" id="mmu:18489"/>
<dbReference type="UCSC" id="uc009cjw.1">
    <property type="organism name" value="mouse"/>
</dbReference>
<dbReference type="AGR" id="MGI:97478"/>
<dbReference type="CTD" id="18489"/>
<dbReference type="MGI" id="MGI:97478">
    <property type="gene designation" value="Reg3b"/>
</dbReference>
<dbReference type="VEuPathDB" id="HostDB:ENSMUSG00000071356"/>
<dbReference type="eggNOG" id="KOG4297">
    <property type="taxonomic scope" value="Eukaryota"/>
</dbReference>
<dbReference type="GeneTree" id="ENSGT00940000154447"/>
<dbReference type="HOGENOM" id="CLU_049894_18_0_1"/>
<dbReference type="InParanoid" id="P35230"/>
<dbReference type="OMA" id="PRISCPS"/>
<dbReference type="OrthoDB" id="418245at2759"/>
<dbReference type="PhylomeDB" id="P35230"/>
<dbReference type="Reactome" id="R-MMU-6803157">
    <property type="pathway name" value="Antimicrobial peptides"/>
</dbReference>
<dbReference type="BioGRID-ORCS" id="18489">
    <property type="hits" value="2 hits in 78 CRISPR screens"/>
</dbReference>
<dbReference type="ChiTaRS" id="Reg3b">
    <property type="organism name" value="mouse"/>
</dbReference>
<dbReference type="PRO" id="PR:P35230"/>
<dbReference type="Proteomes" id="UP000000589">
    <property type="component" value="Chromosome 6"/>
</dbReference>
<dbReference type="RNAct" id="P35230">
    <property type="molecule type" value="protein"/>
</dbReference>
<dbReference type="Bgee" id="ENSMUSG00000071356">
    <property type="expression patterns" value="Expressed in paneth cell and 62 other cell types or tissues"/>
</dbReference>
<dbReference type="ExpressionAtlas" id="P35230">
    <property type="expression patterns" value="baseline and differential"/>
</dbReference>
<dbReference type="GO" id="GO:0062023">
    <property type="term" value="C:collagen-containing extracellular matrix"/>
    <property type="evidence" value="ECO:0007005"/>
    <property type="project" value="BHF-UCL"/>
</dbReference>
<dbReference type="GO" id="GO:0005576">
    <property type="term" value="C:extracellular region"/>
    <property type="evidence" value="ECO:0007669"/>
    <property type="project" value="UniProtKB-SubCell"/>
</dbReference>
<dbReference type="GO" id="GO:0030246">
    <property type="term" value="F:carbohydrate binding"/>
    <property type="evidence" value="ECO:0007669"/>
    <property type="project" value="UniProtKB-KW"/>
</dbReference>
<dbReference type="GO" id="GO:0046872">
    <property type="term" value="F:metal ion binding"/>
    <property type="evidence" value="ECO:0007669"/>
    <property type="project" value="UniProtKB-KW"/>
</dbReference>
<dbReference type="GO" id="GO:0006953">
    <property type="term" value="P:acute-phase response"/>
    <property type="evidence" value="ECO:0007669"/>
    <property type="project" value="UniProtKB-KW"/>
</dbReference>
<dbReference type="GO" id="GO:0050829">
    <property type="term" value="P:defense response to Gram-negative bacterium"/>
    <property type="evidence" value="ECO:0000314"/>
    <property type="project" value="UniProtKB"/>
</dbReference>
<dbReference type="GO" id="GO:0050830">
    <property type="term" value="P:defense response to Gram-positive bacterium"/>
    <property type="evidence" value="ECO:0000314"/>
    <property type="project" value="UniProtKB"/>
</dbReference>
<dbReference type="GO" id="GO:0009617">
    <property type="term" value="P:response to bacterium"/>
    <property type="evidence" value="ECO:0000270"/>
    <property type="project" value="MGI"/>
</dbReference>
<dbReference type="CDD" id="cd03594">
    <property type="entry name" value="CLECT_REG-1_like"/>
    <property type="match status" value="1"/>
</dbReference>
<dbReference type="FunFam" id="3.10.100.10:FF:000015">
    <property type="entry name" value="C-type lectin Cal"/>
    <property type="match status" value="1"/>
</dbReference>
<dbReference type="Gene3D" id="3.10.100.10">
    <property type="entry name" value="Mannose-Binding Protein A, subunit A"/>
    <property type="match status" value="1"/>
</dbReference>
<dbReference type="InterPro" id="IPR001304">
    <property type="entry name" value="C-type_lectin-like"/>
</dbReference>
<dbReference type="InterPro" id="IPR016186">
    <property type="entry name" value="C-type_lectin-like/link_sf"/>
</dbReference>
<dbReference type="InterPro" id="IPR050111">
    <property type="entry name" value="C-type_lectin/snaclec_domain"/>
</dbReference>
<dbReference type="InterPro" id="IPR018378">
    <property type="entry name" value="C-type_lectin_CS"/>
</dbReference>
<dbReference type="InterPro" id="IPR016187">
    <property type="entry name" value="CTDL_fold"/>
</dbReference>
<dbReference type="PANTHER" id="PTHR22803">
    <property type="entry name" value="MANNOSE, PHOSPHOLIPASE, LECTIN RECEPTOR RELATED"/>
    <property type="match status" value="1"/>
</dbReference>
<dbReference type="Pfam" id="PF00059">
    <property type="entry name" value="Lectin_C"/>
    <property type="match status" value="1"/>
</dbReference>
<dbReference type="PRINTS" id="PR01504">
    <property type="entry name" value="PNCREATITSAP"/>
</dbReference>
<dbReference type="SMART" id="SM00034">
    <property type="entry name" value="CLECT"/>
    <property type="match status" value="1"/>
</dbReference>
<dbReference type="SUPFAM" id="SSF56436">
    <property type="entry name" value="C-type lectin-like"/>
    <property type="match status" value="1"/>
</dbReference>
<dbReference type="PROSITE" id="PS00615">
    <property type="entry name" value="C_TYPE_LECTIN_1"/>
    <property type="match status" value="1"/>
</dbReference>
<dbReference type="PROSITE" id="PS50041">
    <property type="entry name" value="C_TYPE_LECTIN_2"/>
    <property type="match status" value="1"/>
</dbReference>
<evidence type="ECO:0000250" key="1"/>
<evidence type="ECO:0000250" key="2">
    <source>
        <dbReference type="UniProtKB" id="Q06141"/>
    </source>
</evidence>
<evidence type="ECO:0000255" key="3">
    <source>
        <dbReference type="PROSITE-ProRule" id="PRU00040"/>
    </source>
</evidence>
<evidence type="ECO:0000269" key="4">
    <source>
    </source>
</evidence>
<evidence type="ECO:0000269" key="5">
    <source>
    </source>
</evidence>
<evidence type="ECO:0000269" key="6">
    <source>
    </source>
</evidence>
<evidence type="ECO:0000305" key="7"/>
<evidence type="ECO:0000305" key="8">
    <source>
    </source>
</evidence>
<evidence type="ECO:0000312" key="9">
    <source>
        <dbReference type="MGI" id="MGI:97478"/>
    </source>
</evidence>
<feature type="signal peptide" evidence="1">
    <location>
        <begin position="1"/>
        <end position="26"/>
    </location>
</feature>
<feature type="chain" id="PRO_0000017432" description="Regenerating islet-derived protein 3-beta 16.5 kDa form">
    <location>
        <begin position="27"/>
        <end position="175"/>
    </location>
</feature>
<feature type="propeptide" id="PRO_0000422747" evidence="1">
    <location>
        <begin position="27"/>
        <end position="37"/>
    </location>
</feature>
<feature type="chain" id="PRO_0000422748" description="Regenerating islet-derived protein 3-beta 15 kDa form">
    <location>
        <begin position="38"/>
        <end position="175"/>
    </location>
</feature>
<feature type="domain" description="C-type lectin" evidence="3">
    <location>
        <begin position="47"/>
        <end position="172"/>
    </location>
</feature>
<feature type="short sequence motif" description="EPN" evidence="2">
    <location>
        <begin position="114"/>
        <end position="116"/>
    </location>
</feature>
<feature type="binding site" evidence="2">
    <location>
        <position position="107"/>
    </location>
    <ligand>
        <name>Zn(2+)</name>
        <dbReference type="ChEBI" id="CHEBI:29105"/>
    </ligand>
</feature>
<feature type="binding site" evidence="2">
    <location>
        <position position="121"/>
    </location>
    <ligand>
        <name>Zn(2+)</name>
        <dbReference type="ChEBI" id="CHEBI:29105"/>
    </ligand>
</feature>
<feature type="disulfide bond" evidence="3">
    <location>
        <begin position="40"/>
        <end position="51"/>
    </location>
</feature>
<feature type="disulfide bond" evidence="3">
    <location>
        <begin position="68"/>
        <end position="171"/>
    </location>
</feature>
<feature type="disulfide bond" evidence="3">
    <location>
        <begin position="146"/>
        <end position="163"/>
    </location>
</feature>
<name>REG3B_MOUSE</name>
<accession>P35230</accession>
<sequence length="175" mass="19476">MLPPTACSVMSWMLLSCLMLLSQVQGEDSLKNIPSARISCPKGSQAYGSYCYALFQIPQTWFDAELACQKRPGGHLVSVLNSAEASFLSSMVKRTGNSYQYTWIGLHDPTLGAEPNGGGWEWSNNDVMNYFNWERNPSTALDRAFCGSLSRASGFLKWRDMTCEVKLPYVCKFTG</sequence>
<gene>
    <name evidence="9" type="primary">Reg3b</name>
    <name type="synonym">Pap</name>
    <name type="synonym">Pap1</name>
</gene>
<reference key="1">
    <citation type="journal article" date="1993" name="Biochim. Biophys. Acta">
        <title>Cloning and tissue-specific expression of cDNAs for the human and mouse homologues of rat pancreatitis-associated protein (PAP).</title>
        <authorList>
            <person name="Itoh T."/>
            <person name="Teraoka H."/>
        </authorList>
    </citation>
    <scope>NUCLEOTIDE SEQUENCE [MRNA]</scope>
    <source>
        <tissue>Pancreas</tissue>
        <tissue>Small intestine</tissue>
    </source>
</reference>
<reference key="2">
    <citation type="journal article" date="1997" name="Gene">
        <title>Structure, chromosomal localization and expression of mouse genes encoding type III Reg, RegIII alpha, RegIII beta, RegIII gamma.</title>
        <authorList>
            <person name="Narushima Y."/>
            <person name="Unno M."/>
            <person name="Nakagawara K."/>
            <person name="Mori M."/>
            <person name="Miyashita H."/>
            <person name="Suzuki Y."/>
            <person name="Noguchi N."/>
            <person name="Takasawa S."/>
            <person name="Kumagai T."/>
            <person name="Yonekura H."/>
            <person name="Okamoto H."/>
        </authorList>
    </citation>
    <scope>NUCLEOTIDE SEQUENCE [GENOMIC DNA / MRNA]</scope>
    <source>
        <strain>C57BL/6J</strain>
        <tissue>Pancreas</tissue>
    </source>
</reference>
<reference key="3">
    <citation type="journal article" date="2004" name="Genome Res.">
        <title>The status, quality, and expansion of the NIH full-length cDNA project: the Mammalian Gene Collection (MGC).</title>
        <authorList>
            <consortium name="The MGC Project Team"/>
        </authorList>
    </citation>
    <scope>NUCLEOTIDE SEQUENCE [LARGE SCALE MRNA]</scope>
    <source>
        <strain>C57BL/6J</strain>
        <tissue>Thymus</tissue>
    </source>
</reference>
<reference key="4">
    <citation type="journal article" date="2010" name="Cell">
        <title>A tissue-specific atlas of mouse protein phosphorylation and expression.</title>
        <authorList>
            <person name="Huttlin E.L."/>
            <person name="Jedrychowski M.P."/>
            <person name="Elias J.E."/>
            <person name="Goswami T."/>
            <person name="Rad R."/>
            <person name="Beausoleil S.A."/>
            <person name="Villen J."/>
            <person name="Haas W."/>
            <person name="Sowa M.E."/>
            <person name="Gygi S.P."/>
        </authorList>
    </citation>
    <scope>IDENTIFICATION BY MASS SPECTROMETRY [LARGE SCALE ANALYSIS]</scope>
    <source>
        <tissue>Kidney</tissue>
        <tissue>Pancreas</tissue>
    </source>
</reference>
<reference key="5">
    <citation type="journal article" date="2011" name="PLoS ONE">
        <title>Salmonella-induced mucosal lectin RegIII? kills competing gut microbiota.</title>
        <authorList>
            <person name="Stelter C."/>
            <person name="Kaeppeli R."/>
            <person name="Koenig C."/>
            <person name="Krah A."/>
            <person name="Hardt W.D."/>
            <person name="Stecher B."/>
            <person name="Bumann D."/>
        </authorList>
    </citation>
    <scope>FUNCTION</scope>
    <scope>INDUCTION</scope>
    <scope>PROTEOLYTIC PROCESSING</scope>
</reference>
<reference key="6">
    <citation type="journal article" date="2012" name="Infect. Immun.">
        <title>Intestinally secreted C-type lectin Reg3b attenuates salmonellosis but not listeriosis in mice.</title>
        <authorList>
            <person name="van Ampting M.T."/>
            <person name="Loonen L.M."/>
            <person name="Schonewille A.J."/>
            <person name="Konings I."/>
            <person name="Vink C."/>
            <person name="Iovanna J."/>
            <person name="Chamaillard M."/>
            <person name="Dekker J."/>
            <person name="van der Meer R."/>
            <person name="Wells J.M."/>
            <person name="Bovee-Oudenhoven I.M."/>
        </authorList>
    </citation>
    <scope>FUNCTION</scope>
    <scope>DISRUPTION PHENOTYPE</scope>
</reference>
<reference key="7">
    <citation type="journal article" date="2021" name="Commun. Biol.">
        <title>REG3A/REG3B promotes acinar to ductal metaplasia through binding to EXTL3 and activating the RAS-RAF-MEK-ERK signaling pathway.</title>
        <authorList>
            <person name="Zhang H."/>
            <person name="Corredor A.L.G."/>
            <person name="Messina-Pacheco J."/>
            <person name="Li Q."/>
            <person name="Zogopoulos G."/>
            <person name="Kaddour N."/>
            <person name="Wang Y."/>
            <person name="Shi B.Y."/>
            <person name="Gregorieff A."/>
            <person name="Liu J.L."/>
            <person name="Gao Z.H."/>
        </authorList>
    </citation>
    <scope>FUNCTION</scope>
    <scope>TISSUE SPECIFICITY</scope>
    <scope>SUBCELLULAR LOCATION</scope>
</reference>
<keyword id="KW-0011">Acute phase</keyword>
<keyword id="KW-0929">Antimicrobial</keyword>
<keyword id="KW-1015">Disulfide bond</keyword>
<keyword id="KW-0395">Inflammatory response</keyword>
<keyword id="KW-0430">Lectin</keyword>
<keyword id="KW-0479">Metal-binding</keyword>
<keyword id="KW-1185">Reference proteome</keyword>
<keyword id="KW-0964">Secreted</keyword>
<keyword id="KW-0732">Signal</keyword>
<keyword id="KW-0862">Zinc</keyword>
<proteinExistence type="evidence at protein level"/>
<protein>
    <recommendedName>
        <fullName evidence="7">Regenerating islet-derived protein 3-beta</fullName>
        <shortName>REG-3-beta</shortName>
    </recommendedName>
    <alternativeName>
        <fullName>Pancreatitis-associated protein 1</fullName>
    </alternativeName>
    <alternativeName>
        <fullName>Regenerating islet-derived protein III-beta</fullName>
        <shortName>Reg III-beta</shortName>
    </alternativeName>
    <component>
        <recommendedName>
            <fullName>Regenerating islet-derived protein 3-beta 16.5 kDa form</fullName>
        </recommendedName>
    </component>
    <component>
        <recommendedName>
            <fullName>Regenerating islet-derived protein 3-beta 15 kDa form</fullName>
        </recommendedName>
    </component>
</protein>
<comment type="function">
    <text evidence="4 5">Bactericidal C-type lectin which acts against several intestinal Gram-positive and Gram-negative bacteria. Lacks antibacterial activity against S.typhimurium. May play a role in protection against infection with S.enteritidis by inhibiting its translocation from the gut lumen into intestinal tissues and further extraintestinal tissues.</text>
</comment>
<comment type="function">
    <text evidence="6">Acts as a hormone in response to different stimuli. Secreted by different cell types to activate its receptor EXTL3 and induce cell specific signaling pathways (PubMed:34099862). In pancreas, is able stimulate cell proliferation (PubMed:34099862).</text>
</comment>
<comment type="activity regulation">
    <molecule>Regenerating islet-derived protein 3-beta 15 kDa form</molecule>
    <text evidence="2">Lipopolysaccharide inhibits pore-forming activity, explaining why is bactericidal for Gram-positive but not Gram-negative bacteria.</text>
</comment>
<comment type="subunit">
    <molecule>Regenerating islet-derived protein 3-beta 15 kDa form</molecule>
    <text evidence="2">Forms a hexameric membrane-permeabilizing oligomeric pore on membrane phospholipids. The hexamer is formed by three dimers related by helical symmetry. Forms filaments, filamentation traps pore complexes and limits damage to host cells. Interacts with EXTL3.</text>
</comment>
<comment type="subcellular location">
    <subcellularLocation>
        <location evidence="8">Secreted</location>
    </subcellularLocation>
    <text evidence="8">Found in the apical region of pancreatic acinar cells.</text>
</comment>
<comment type="tissue specificity">
    <text evidence="6">Constitutively expressed in the small intestine, moderately in colon and at an extremely low level in healthy pancreas.</text>
</comment>
<comment type="induction">
    <text evidence="4">Up-regulated in the intestine by S.typhimurium infection (at protein level). Appears in pancreatic juice after induction of pancreatic inflammation.</text>
</comment>
<comment type="domain">
    <text evidence="2">The EPN motif is essential for recognition of the peptidoglycan carbohydrate backbone and for efficient bacterial killing with Glu-114 playing a key role in peptidoglycan binding and bactericidal activity.</text>
</comment>
<comment type="PTM">
    <text evidence="4">Proteolytic processing by trypsin removes an inhibitory N-terminal propeptide and is essential for peptidoglycan binding and antibacterial activity.</text>
</comment>
<comment type="disease">
    <text>Overexpressed during the acute phase of pancreatitis.</text>
</comment>
<comment type="disruption phenotype">
    <text evidence="5">Mice are more susceptible to salmonellosis, but not listeriosis.</text>
</comment>
<comment type="online information" name="Functional Glycomics Gateway - Glycan Binding">
    <link uri="http://www.functionalglycomics.org/glycomics/GBPServlet?&amp;operationType=view&amp;cbpId=cbp_mou_Ctlect_184"/>
    <text>Pancreatitis-associated protein 1</text>
</comment>
<organism>
    <name type="scientific">Mus musculus</name>
    <name type="common">Mouse</name>
    <dbReference type="NCBI Taxonomy" id="10090"/>
    <lineage>
        <taxon>Eukaryota</taxon>
        <taxon>Metazoa</taxon>
        <taxon>Chordata</taxon>
        <taxon>Craniata</taxon>
        <taxon>Vertebrata</taxon>
        <taxon>Euteleostomi</taxon>
        <taxon>Mammalia</taxon>
        <taxon>Eutheria</taxon>
        <taxon>Euarchontoglires</taxon>
        <taxon>Glires</taxon>
        <taxon>Rodentia</taxon>
        <taxon>Myomorpha</taxon>
        <taxon>Muroidea</taxon>
        <taxon>Muridae</taxon>
        <taxon>Murinae</taxon>
        <taxon>Mus</taxon>
        <taxon>Mus</taxon>
    </lineage>
</organism>